<sequence>MSKSPKHFLDINELPLSELKSMLDASSAMKAKQKAHQPVRPLEGKTLAMIFERPSTRTRVSFDVAMRQLGGEPIMLTGAEMQLGRGETIADTARVLSRYVDAIMIRILNHDALLELAANATVPVINGLTRRSHPCQVMADLLTYQEHRGPIEGRTVAWTGDDNNVLASWAHAAERFKFQLNVATPPELAPKKAMRDWIKASGAPIMLGTDPEAAVRGADCVVTDTWVSMGDKEGEHRHNVLKPYQVNAKLMSLAKPDALFMHCLPAHRGEEVTDEVIDGPQSVVFDEAENRLHAQKGILAWCFDAVK</sequence>
<evidence type="ECO:0000250" key="1"/>
<evidence type="ECO:0000255" key="2">
    <source>
        <dbReference type="HAMAP-Rule" id="MF_01109"/>
    </source>
</evidence>
<comment type="function">
    <text evidence="1">Reversibly catalyzes the transfer of the carbamoyl group from carbamoyl phosphate (CP) to the N(epsilon) atom of ornithine (ORN) to produce L-citrulline.</text>
</comment>
<comment type="catalytic activity">
    <reaction evidence="2">
        <text>carbamoyl phosphate + L-ornithine = L-citrulline + phosphate + H(+)</text>
        <dbReference type="Rhea" id="RHEA:19513"/>
        <dbReference type="ChEBI" id="CHEBI:15378"/>
        <dbReference type="ChEBI" id="CHEBI:43474"/>
        <dbReference type="ChEBI" id="CHEBI:46911"/>
        <dbReference type="ChEBI" id="CHEBI:57743"/>
        <dbReference type="ChEBI" id="CHEBI:58228"/>
        <dbReference type="EC" id="2.1.3.3"/>
    </reaction>
</comment>
<comment type="pathway">
    <text evidence="2">Amino-acid biosynthesis; L-arginine biosynthesis; L-arginine from L-ornithine and carbamoyl phosphate: step 1/3.</text>
</comment>
<comment type="subcellular location">
    <subcellularLocation>
        <location evidence="2">Cytoplasm</location>
    </subcellularLocation>
</comment>
<comment type="similarity">
    <text evidence="2">Belongs to the aspartate/ornithine carbamoyltransferase superfamily. OTCase family.</text>
</comment>
<name>OTC_BRADU</name>
<keyword id="KW-0028">Amino-acid biosynthesis</keyword>
<keyword id="KW-0055">Arginine biosynthesis</keyword>
<keyword id="KW-0963">Cytoplasm</keyword>
<keyword id="KW-1185">Reference proteome</keyword>
<keyword id="KW-0808">Transferase</keyword>
<protein>
    <recommendedName>
        <fullName evidence="2">Ornithine carbamoyltransferase</fullName>
        <shortName evidence="2">OTCase</shortName>
        <ecNumber evidence="2">2.1.3.3</ecNumber>
    </recommendedName>
</protein>
<accession>Q89VE8</accession>
<gene>
    <name evidence="2" type="primary">argF</name>
    <name type="ordered locus">blr1099</name>
</gene>
<feature type="chain" id="PRO_0000112894" description="Ornithine carbamoyltransferase">
    <location>
        <begin position="1"/>
        <end position="307"/>
    </location>
</feature>
<feature type="binding site" evidence="2">
    <location>
        <begin position="55"/>
        <end position="58"/>
    </location>
    <ligand>
        <name>carbamoyl phosphate</name>
        <dbReference type="ChEBI" id="CHEBI:58228"/>
    </ligand>
</feature>
<feature type="binding site" evidence="2">
    <location>
        <position position="82"/>
    </location>
    <ligand>
        <name>carbamoyl phosphate</name>
        <dbReference type="ChEBI" id="CHEBI:58228"/>
    </ligand>
</feature>
<feature type="binding site" evidence="2">
    <location>
        <position position="106"/>
    </location>
    <ligand>
        <name>carbamoyl phosphate</name>
        <dbReference type="ChEBI" id="CHEBI:58228"/>
    </ligand>
</feature>
<feature type="binding site" evidence="2">
    <location>
        <begin position="133"/>
        <end position="136"/>
    </location>
    <ligand>
        <name>carbamoyl phosphate</name>
        <dbReference type="ChEBI" id="CHEBI:58228"/>
    </ligand>
</feature>
<feature type="binding site" evidence="2">
    <location>
        <position position="164"/>
    </location>
    <ligand>
        <name>L-ornithine</name>
        <dbReference type="ChEBI" id="CHEBI:46911"/>
    </ligand>
</feature>
<feature type="binding site" evidence="2">
    <location>
        <position position="224"/>
    </location>
    <ligand>
        <name>L-ornithine</name>
        <dbReference type="ChEBI" id="CHEBI:46911"/>
    </ligand>
</feature>
<feature type="binding site" evidence="2">
    <location>
        <begin position="228"/>
        <end position="229"/>
    </location>
    <ligand>
        <name>L-ornithine</name>
        <dbReference type="ChEBI" id="CHEBI:46911"/>
    </ligand>
</feature>
<feature type="binding site" evidence="2">
    <location>
        <begin position="263"/>
        <end position="264"/>
    </location>
    <ligand>
        <name>carbamoyl phosphate</name>
        <dbReference type="ChEBI" id="CHEBI:58228"/>
    </ligand>
</feature>
<feature type="binding site" evidence="2">
    <location>
        <position position="291"/>
    </location>
    <ligand>
        <name>carbamoyl phosphate</name>
        <dbReference type="ChEBI" id="CHEBI:58228"/>
    </ligand>
</feature>
<dbReference type="EC" id="2.1.3.3" evidence="2"/>
<dbReference type="EMBL" id="BA000040">
    <property type="protein sequence ID" value="BAC46364.1"/>
    <property type="molecule type" value="Genomic_DNA"/>
</dbReference>
<dbReference type="RefSeq" id="NP_767739.1">
    <property type="nucleotide sequence ID" value="NC_004463.1"/>
</dbReference>
<dbReference type="RefSeq" id="WP_011083918.1">
    <property type="nucleotide sequence ID" value="NC_004463.1"/>
</dbReference>
<dbReference type="SMR" id="Q89VE8"/>
<dbReference type="FunCoup" id="Q89VE8">
    <property type="interactions" value="541"/>
</dbReference>
<dbReference type="STRING" id="224911.AAV28_02355"/>
<dbReference type="EnsemblBacteria" id="BAC46364">
    <property type="protein sequence ID" value="BAC46364"/>
    <property type="gene ID" value="BAC46364"/>
</dbReference>
<dbReference type="GeneID" id="46488370"/>
<dbReference type="KEGG" id="bja:blr1099"/>
<dbReference type="PATRIC" id="fig|224911.44.peg.498"/>
<dbReference type="eggNOG" id="COG0078">
    <property type="taxonomic scope" value="Bacteria"/>
</dbReference>
<dbReference type="HOGENOM" id="CLU_043846_3_2_5"/>
<dbReference type="InParanoid" id="Q89VE8"/>
<dbReference type="OrthoDB" id="9802587at2"/>
<dbReference type="PhylomeDB" id="Q89VE8"/>
<dbReference type="UniPathway" id="UPA00068">
    <property type="reaction ID" value="UER00112"/>
</dbReference>
<dbReference type="Proteomes" id="UP000002526">
    <property type="component" value="Chromosome"/>
</dbReference>
<dbReference type="GO" id="GO:0005737">
    <property type="term" value="C:cytoplasm"/>
    <property type="evidence" value="ECO:0007669"/>
    <property type="project" value="UniProtKB-SubCell"/>
</dbReference>
<dbReference type="GO" id="GO:0016597">
    <property type="term" value="F:amino acid binding"/>
    <property type="evidence" value="ECO:0007669"/>
    <property type="project" value="InterPro"/>
</dbReference>
<dbReference type="GO" id="GO:0004585">
    <property type="term" value="F:ornithine carbamoyltransferase activity"/>
    <property type="evidence" value="ECO:0000318"/>
    <property type="project" value="GO_Central"/>
</dbReference>
<dbReference type="GO" id="GO:0042450">
    <property type="term" value="P:arginine biosynthetic process via ornithine"/>
    <property type="evidence" value="ECO:0000318"/>
    <property type="project" value="GO_Central"/>
</dbReference>
<dbReference type="GO" id="GO:0019240">
    <property type="term" value="P:citrulline biosynthetic process"/>
    <property type="evidence" value="ECO:0000318"/>
    <property type="project" value="GO_Central"/>
</dbReference>
<dbReference type="GO" id="GO:0006526">
    <property type="term" value="P:L-arginine biosynthetic process"/>
    <property type="evidence" value="ECO:0007669"/>
    <property type="project" value="UniProtKB-UniRule"/>
</dbReference>
<dbReference type="FunFam" id="3.40.50.1370:FF:000008">
    <property type="entry name" value="Ornithine carbamoyltransferase"/>
    <property type="match status" value="1"/>
</dbReference>
<dbReference type="Gene3D" id="3.40.50.1370">
    <property type="entry name" value="Aspartate/ornithine carbamoyltransferase"/>
    <property type="match status" value="2"/>
</dbReference>
<dbReference type="HAMAP" id="MF_01109">
    <property type="entry name" value="OTCase"/>
    <property type="match status" value="1"/>
</dbReference>
<dbReference type="InterPro" id="IPR006132">
    <property type="entry name" value="Asp/Orn_carbamoyltranf_P-bd"/>
</dbReference>
<dbReference type="InterPro" id="IPR006130">
    <property type="entry name" value="Asp/Orn_carbamoylTrfase"/>
</dbReference>
<dbReference type="InterPro" id="IPR036901">
    <property type="entry name" value="Asp/Orn_carbamoylTrfase_sf"/>
</dbReference>
<dbReference type="InterPro" id="IPR006131">
    <property type="entry name" value="Asp_carbamoyltransf_Asp/Orn-bd"/>
</dbReference>
<dbReference type="InterPro" id="IPR002292">
    <property type="entry name" value="Orn/put_carbamltrans"/>
</dbReference>
<dbReference type="InterPro" id="IPR024904">
    <property type="entry name" value="OTCase_ArgI"/>
</dbReference>
<dbReference type="NCBIfam" id="TIGR00658">
    <property type="entry name" value="orni_carb_tr"/>
    <property type="match status" value="1"/>
</dbReference>
<dbReference type="NCBIfam" id="NF001986">
    <property type="entry name" value="PRK00779.1"/>
    <property type="match status" value="1"/>
</dbReference>
<dbReference type="PANTHER" id="PTHR45753">
    <property type="entry name" value="ORNITHINE CARBAMOYLTRANSFERASE, MITOCHONDRIAL"/>
    <property type="match status" value="1"/>
</dbReference>
<dbReference type="PANTHER" id="PTHR45753:SF3">
    <property type="entry name" value="ORNITHINE TRANSCARBAMYLASE, MITOCHONDRIAL"/>
    <property type="match status" value="1"/>
</dbReference>
<dbReference type="Pfam" id="PF00185">
    <property type="entry name" value="OTCace"/>
    <property type="match status" value="1"/>
</dbReference>
<dbReference type="Pfam" id="PF02729">
    <property type="entry name" value="OTCace_N"/>
    <property type="match status" value="1"/>
</dbReference>
<dbReference type="PRINTS" id="PR00100">
    <property type="entry name" value="AOTCASE"/>
</dbReference>
<dbReference type="PRINTS" id="PR00102">
    <property type="entry name" value="OTCASE"/>
</dbReference>
<dbReference type="SUPFAM" id="SSF53671">
    <property type="entry name" value="Aspartate/ornithine carbamoyltransferase"/>
    <property type="match status" value="1"/>
</dbReference>
<reference key="1">
    <citation type="journal article" date="2002" name="DNA Res.">
        <title>Complete genomic sequence of nitrogen-fixing symbiotic bacterium Bradyrhizobium japonicum USDA110.</title>
        <authorList>
            <person name="Kaneko T."/>
            <person name="Nakamura Y."/>
            <person name="Sato S."/>
            <person name="Minamisawa K."/>
            <person name="Uchiumi T."/>
            <person name="Sasamoto S."/>
            <person name="Watanabe A."/>
            <person name="Idesawa K."/>
            <person name="Iriguchi M."/>
            <person name="Kawashima K."/>
            <person name="Kohara M."/>
            <person name="Matsumoto M."/>
            <person name="Shimpo S."/>
            <person name="Tsuruoka H."/>
            <person name="Wada T."/>
            <person name="Yamada M."/>
            <person name="Tabata S."/>
        </authorList>
    </citation>
    <scope>NUCLEOTIDE SEQUENCE [LARGE SCALE GENOMIC DNA]</scope>
    <source>
        <strain>JCM 10833 / BCRC 13528 / IAM 13628 / NBRC 14792 / USDA 110</strain>
    </source>
</reference>
<proteinExistence type="inferred from homology"/>
<organism>
    <name type="scientific">Bradyrhizobium diazoefficiens (strain JCM 10833 / BCRC 13528 / IAM 13628 / NBRC 14792 / USDA 110)</name>
    <dbReference type="NCBI Taxonomy" id="224911"/>
    <lineage>
        <taxon>Bacteria</taxon>
        <taxon>Pseudomonadati</taxon>
        <taxon>Pseudomonadota</taxon>
        <taxon>Alphaproteobacteria</taxon>
        <taxon>Hyphomicrobiales</taxon>
        <taxon>Nitrobacteraceae</taxon>
        <taxon>Bradyrhizobium</taxon>
    </lineage>
</organism>